<accession>P85760</accession>
<protein>
    <recommendedName>
        <fullName evidence="1">Hypertrehalosaemic factor</fullName>
    </recommendedName>
    <alternativeName>
        <fullName evidence="4">Adipokinetic hormone 1</fullName>
        <shortName evidence="4">PseFo-AKH-1</shortName>
    </alternativeName>
    <alternativeName>
        <fullName evidence="1">Hypertrehalosaemic neuropeptide</fullName>
    </alternativeName>
</protein>
<evidence type="ECO:0000250" key="1">
    <source>
        <dbReference type="UniProtKB" id="P67790"/>
    </source>
</evidence>
<evidence type="ECO:0000255" key="2"/>
<evidence type="ECO:0000269" key="3">
    <source>
    </source>
</evidence>
<evidence type="ECO:0000303" key="4">
    <source>
    </source>
</evidence>
<evidence type="ECO:0000305" key="5"/>
<keyword id="KW-0027">Amidation</keyword>
<keyword id="KW-0903">Direct protein sequencing</keyword>
<keyword id="KW-0372">Hormone</keyword>
<keyword id="KW-0527">Neuropeptide</keyword>
<keyword id="KW-0873">Pyrrolidone carboxylic acid</keyword>
<keyword id="KW-0964">Secreted</keyword>
<feature type="peptide" id="PRO_0000378669" description="Hypertrehalosaemic factor" evidence="3">
    <location>
        <begin position="1"/>
        <end position="8"/>
    </location>
</feature>
<feature type="modified residue" description="Pyrrolidone carboxylic acid" evidence="3">
    <location>
        <position position="1"/>
    </location>
</feature>
<feature type="modified residue" description="Tryptophan amide" evidence="3">
    <location>
        <position position="8"/>
    </location>
</feature>
<sequence length="8" mass="991">QVNFSPNW</sequence>
<reference evidence="5" key="1">
    <citation type="journal article" date="2009" name="BMC Evol. Biol.">
        <title>A proteomic approach for studying insect phylogeny: CAPA peptides of ancient insect taxa (Dictyoptera, Blattoptera) as a test case.</title>
        <authorList>
            <person name="Roth S."/>
            <person name="Fromm B."/>
            <person name="Gaede G."/>
            <person name="Predel R."/>
        </authorList>
    </citation>
    <scope>PROTEIN SEQUENCE</scope>
    <scope>PYROGLUTAMATE FORMATION AT GLN-1</scope>
    <scope>AMIDATION AT TRP-8</scope>
    <source>
        <tissue evidence="3">Corpora cardiaca</tissue>
    </source>
</reference>
<organism>
    <name type="scientific">Pseudoderopeltis foveolata</name>
    <name type="common">Cockroach</name>
    <dbReference type="NCBI Taxonomy" id="303879"/>
    <lineage>
        <taxon>Eukaryota</taxon>
        <taxon>Metazoa</taxon>
        <taxon>Ecdysozoa</taxon>
        <taxon>Arthropoda</taxon>
        <taxon>Hexapoda</taxon>
        <taxon>Insecta</taxon>
        <taxon>Pterygota</taxon>
        <taxon>Neoptera</taxon>
        <taxon>Polyneoptera</taxon>
        <taxon>Dictyoptera</taxon>
        <taxon>Blattodea</taxon>
        <taxon>Blattoidea</taxon>
        <taxon>Blattidae</taxon>
        <taxon>Blattinae</taxon>
        <taxon>Pseudoderopeltis</taxon>
    </lineage>
</organism>
<name>HTF_PSEFO</name>
<dbReference type="GO" id="GO:0005576">
    <property type="term" value="C:extracellular region"/>
    <property type="evidence" value="ECO:0007669"/>
    <property type="project" value="UniProtKB-SubCell"/>
</dbReference>
<dbReference type="GO" id="GO:0005179">
    <property type="term" value="F:hormone activity"/>
    <property type="evidence" value="ECO:0007669"/>
    <property type="project" value="UniProtKB-KW"/>
</dbReference>
<dbReference type="GO" id="GO:0007218">
    <property type="term" value="P:neuropeptide signaling pathway"/>
    <property type="evidence" value="ECO:0007669"/>
    <property type="project" value="UniProtKB-KW"/>
</dbReference>
<dbReference type="InterPro" id="IPR002047">
    <property type="entry name" value="Adipokinetic_hormone_CS"/>
</dbReference>
<dbReference type="PROSITE" id="PS00256">
    <property type="entry name" value="AKH"/>
    <property type="match status" value="1"/>
</dbReference>
<proteinExistence type="evidence at protein level"/>
<comment type="function">
    <text evidence="5">Hypertrehalosaemic factors are neuropeptides that elevate the level of trehalose in the hemolymph (trehalose is the major carbohydrate in the hemolymph of insects).</text>
</comment>
<comment type="subcellular location">
    <subcellularLocation>
        <location evidence="5">Secreted</location>
    </subcellularLocation>
</comment>
<comment type="similarity">
    <text evidence="2">Belongs to the AKH/HRTH/RPCH family.</text>
</comment>